<evidence type="ECO:0000255" key="1"/>
<evidence type="ECO:0000269" key="2">
    <source>
    </source>
</evidence>
<evidence type="ECO:0000269" key="3">
    <source>
    </source>
</evidence>
<evidence type="ECO:0000269" key="4">
    <source>
    </source>
</evidence>
<evidence type="ECO:0000269" key="5">
    <source>
    </source>
</evidence>
<evidence type="ECO:0000305" key="6"/>
<name>DFG5_CANAL</name>
<keyword id="KW-1003">Cell membrane</keyword>
<keyword id="KW-0134">Cell wall</keyword>
<keyword id="KW-0961">Cell wall biogenesis/degradation</keyword>
<keyword id="KW-0325">Glycoprotein</keyword>
<keyword id="KW-0326">Glycosidase</keyword>
<keyword id="KW-0336">GPI-anchor</keyword>
<keyword id="KW-0378">Hydrolase</keyword>
<keyword id="KW-0449">Lipoprotein</keyword>
<keyword id="KW-0472">Membrane</keyword>
<keyword id="KW-1185">Reference proteome</keyword>
<keyword id="KW-0964">Secreted</keyword>
<keyword id="KW-0732">Signal</keyword>
<reference key="1">
    <citation type="journal article" date="2004" name="Proc. Natl. Acad. Sci. U.S.A.">
        <title>The diploid genome sequence of Candida albicans.</title>
        <authorList>
            <person name="Jones T."/>
            <person name="Federspiel N.A."/>
            <person name="Chibana H."/>
            <person name="Dungan J."/>
            <person name="Kalman S."/>
            <person name="Magee B.B."/>
            <person name="Newport G."/>
            <person name="Thorstenson Y.R."/>
            <person name="Agabian N."/>
            <person name="Magee P.T."/>
            <person name="Davis R.W."/>
            <person name="Scherer S."/>
        </authorList>
    </citation>
    <scope>NUCLEOTIDE SEQUENCE [LARGE SCALE GENOMIC DNA]</scope>
    <source>
        <strain>SC5314 / ATCC MYA-2876</strain>
    </source>
</reference>
<reference key="2">
    <citation type="journal article" date="2007" name="Genome Biol.">
        <title>Assembly of the Candida albicans genome into sixteen supercontigs aligned on the eight chromosomes.</title>
        <authorList>
            <person name="van het Hoog M."/>
            <person name="Rast T.J."/>
            <person name="Martchenko M."/>
            <person name="Grindle S."/>
            <person name="Dignard D."/>
            <person name="Hogues H."/>
            <person name="Cuomo C."/>
            <person name="Berriman M."/>
            <person name="Scherer S."/>
            <person name="Magee B.B."/>
            <person name="Whiteway M."/>
            <person name="Chibana H."/>
            <person name="Nantel A."/>
            <person name="Magee P.T."/>
        </authorList>
    </citation>
    <scope>GENOME REANNOTATION</scope>
    <source>
        <strain>SC5314 / ATCC MYA-2876</strain>
    </source>
</reference>
<reference key="3">
    <citation type="journal article" date="2013" name="Genome Biol.">
        <title>Assembly of a phased diploid Candida albicans genome facilitates allele-specific measurements and provides a simple model for repeat and indel structure.</title>
        <authorList>
            <person name="Muzzey D."/>
            <person name="Schwartz K."/>
            <person name="Weissman J.S."/>
            <person name="Sherlock G."/>
        </authorList>
    </citation>
    <scope>NUCLEOTIDE SEQUENCE [LARGE SCALE GENOMIC DNA]</scope>
    <scope>GENOME REANNOTATION</scope>
    <source>
        <strain>SC5314 / ATCC MYA-2876</strain>
    </source>
</reference>
<reference key="4">
    <citation type="journal article" date="2003" name="Eukaryot. Cell">
        <title>Roles of Candida albicans Dfg5p and Dcw1p cell surface proteins in growth and hypha formation.</title>
        <authorList>
            <person name="Spreghini E."/>
            <person name="Davis D.A."/>
            <person name="Subaran R."/>
            <person name="Kim M."/>
            <person name="Mitchell A.P."/>
        </authorList>
    </citation>
    <scope>FUNCTION</scope>
    <scope>GLYCOSYLATION</scope>
    <scope>SUBCELLULAR LOCATION</scope>
</reference>
<reference key="5">
    <citation type="journal article" date="2003" name="Yeast">
        <title>An analysis of the Candida albicans genome database for soluble secreted proteins using computer-based prediction algorithms.</title>
        <authorList>
            <person name="Lee S.A."/>
            <person name="Wormsley S."/>
            <person name="Kamoun S."/>
            <person name="Lee A.F."/>
            <person name="Joiner K."/>
            <person name="Wong B."/>
        </authorList>
    </citation>
    <scope>PREDICTION OF GPI-ANCHOR</scope>
</reference>
<reference key="6">
    <citation type="journal article" date="2003" name="Yeast">
        <title>Genome-wide identification of fungal GPI proteins.</title>
        <authorList>
            <person name="De Groot P.W."/>
            <person name="Hellingwerf K.J."/>
            <person name="Klis F.M."/>
        </authorList>
    </citation>
    <scope>PREDICTION OF GPI-ANCHOR</scope>
</reference>
<reference key="7">
    <citation type="journal article" date="2006" name="PLoS Pathog.">
        <title>Control of the C. albicans cell wall damage response by transcriptional regulator Cas5.</title>
        <authorList>
            <person name="Bruno V.M."/>
            <person name="Kalachikov S."/>
            <person name="Subaran R."/>
            <person name="Nobile C.J."/>
            <person name="Kyratsous C."/>
            <person name="Mitchell A.P."/>
        </authorList>
    </citation>
    <scope>INDUCTION</scope>
</reference>
<reference key="8">
    <citation type="journal article" date="2008" name="Fungal Genet. Biol.">
        <title>Functional analysis of Candida albicans GPI-anchored proteins: roles in cell wall integrity and caspofungin sensitivity.</title>
        <authorList>
            <person name="Plaine A."/>
            <person name="Walker L."/>
            <person name="Da Costa G."/>
            <person name="Mora-Montes H.M."/>
            <person name="McKinnon A."/>
            <person name="Gow N.A."/>
            <person name="Gaillardin C."/>
            <person name="Munro C.A."/>
            <person name="Richard M.L."/>
        </authorList>
    </citation>
    <scope>DISRUPTION PHENOTYPE</scope>
</reference>
<reference key="9">
    <citation type="journal article" date="2013" name="Int. J. Med. Microbiol.">
        <title>The P-type ATPase Spf1 is required for endoplasmic reticulum functions and cell wall integrity in Candida albicans.</title>
        <authorList>
            <person name="Yu Q."/>
            <person name="Ding X."/>
            <person name="Zhang B."/>
            <person name="Xu N."/>
            <person name="Cheng X."/>
            <person name="Qian K."/>
            <person name="Zhang B."/>
            <person name="Xing L."/>
            <person name="Li M."/>
        </authorList>
    </citation>
    <scope>INDUCTION</scope>
</reference>
<gene>
    <name type="primary">DFG5</name>
    <name type="ordered locus">CAALFM_C200520WA</name>
    <name type="ORF">CaO19.2075</name>
    <name type="ORF">CaO19.9622</name>
</gene>
<dbReference type="EC" id="3.2.1.101"/>
<dbReference type="EMBL" id="CP017624">
    <property type="protein sequence ID" value="AOW27106.1"/>
    <property type="molecule type" value="Genomic_DNA"/>
</dbReference>
<dbReference type="RefSeq" id="XP_719522.1">
    <property type="nucleotide sequence ID" value="XM_714429.1"/>
</dbReference>
<dbReference type="SMR" id="Q5ACZ2"/>
<dbReference type="FunCoup" id="Q5ACZ2">
    <property type="interactions" value="28"/>
</dbReference>
<dbReference type="STRING" id="237561.Q5ACZ2"/>
<dbReference type="GlyCosmos" id="Q5ACZ2">
    <property type="glycosylation" value="7 sites, No reported glycans"/>
</dbReference>
<dbReference type="EnsemblFungi" id="C2_00520W_A-T">
    <property type="protein sequence ID" value="C2_00520W_A-T-p1"/>
    <property type="gene ID" value="C2_00520W_A"/>
</dbReference>
<dbReference type="GeneID" id="3638867"/>
<dbReference type="KEGG" id="cal:CAALFM_C200520WA"/>
<dbReference type="CGD" id="CAL0000185288">
    <property type="gene designation" value="DFG5"/>
</dbReference>
<dbReference type="VEuPathDB" id="FungiDB:C2_00520W_A"/>
<dbReference type="eggNOG" id="ENOG502QWHG">
    <property type="taxonomic scope" value="Eukaryota"/>
</dbReference>
<dbReference type="HOGENOM" id="CLU_025694_1_1_1"/>
<dbReference type="InParanoid" id="Q5ACZ2"/>
<dbReference type="OMA" id="GMFQPPY"/>
<dbReference type="OrthoDB" id="4187847at2759"/>
<dbReference type="PRO" id="PR:Q5ACZ2"/>
<dbReference type="Proteomes" id="UP000000559">
    <property type="component" value="Chromosome 2"/>
</dbReference>
<dbReference type="GO" id="GO:0005576">
    <property type="term" value="C:extracellular region"/>
    <property type="evidence" value="ECO:0007669"/>
    <property type="project" value="UniProtKB-KW"/>
</dbReference>
<dbReference type="GO" id="GO:0009277">
    <property type="term" value="C:fungal-type cell wall"/>
    <property type="evidence" value="ECO:0000314"/>
    <property type="project" value="CGD"/>
</dbReference>
<dbReference type="GO" id="GO:0005886">
    <property type="term" value="C:plasma membrane"/>
    <property type="evidence" value="ECO:0000314"/>
    <property type="project" value="CGD"/>
</dbReference>
<dbReference type="GO" id="GO:0098552">
    <property type="term" value="C:side of membrane"/>
    <property type="evidence" value="ECO:0007669"/>
    <property type="project" value="UniProtKB-KW"/>
</dbReference>
<dbReference type="GO" id="GO:0008496">
    <property type="term" value="F:mannan endo-1,6-alpha-mannosidase activity"/>
    <property type="evidence" value="ECO:0007669"/>
    <property type="project" value="UniProtKB-EC"/>
</dbReference>
<dbReference type="GO" id="GO:0007117">
    <property type="term" value="P:budding cell bud growth"/>
    <property type="evidence" value="ECO:0000318"/>
    <property type="project" value="GO_Central"/>
</dbReference>
<dbReference type="GO" id="GO:0016052">
    <property type="term" value="P:carbohydrate catabolic process"/>
    <property type="evidence" value="ECO:0007669"/>
    <property type="project" value="InterPro"/>
</dbReference>
<dbReference type="GO" id="GO:0030447">
    <property type="term" value="P:filamentous growth"/>
    <property type="evidence" value="ECO:0000315"/>
    <property type="project" value="CGD"/>
</dbReference>
<dbReference type="GO" id="GO:0044182">
    <property type="term" value="P:filamentous growth of a population of unicellular organisms"/>
    <property type="evidence" value="ECO:0000315"/>
    <property type="project" value="CGD"/>
</dbReference>
<dbReference type="GO" id="GO:0036180">
    <property type="term" value="P:filamentous growth of a population of unicellular organisms in response to biotic stimulus"/>
    <property type="evidence" value="ECO:0000315"/>
    <property type="project" value="CGD"/>
</dbReference>
<dbReference type="GO" id="GO:0009272">
    <property type="term" value="P:fungal-type cell wall biogenesis"/>
    <property type="evidence" value="ECO:0000315"/>
    <property type="project" value="CGD"/>
</dbReference>
<dbReference type="GO" id="GO:0031505">
    <property type="term" value="P:fungal-type cell wall organization"/>
    <property type="evidence" value="ECO:0000315"/>
    <property type="project" value="CGD"/>
</dbReference>
<dbReference type="GO" id="GO:0010570">
    <property type="term" value="P:regulation of filamentous growth"/>
    <property type="evidence" value="ECO:0000315"/>
    <property type="project" value="CGD"/>
</dbReference>
<dbReference type="FunFam" id="1.50.10.20:FF:000006">
    <property type="entry name" value="Mannan endo-1,6-alpha-mannosidase"/>
    <property type="match status" value="1"/>
</dbReference>
<dbReference type="Gene3D" id="1.50.10.20">
    <property type="match status" value="1"/>
</dbReference>
<dbReference type="InterPro" id="IPR008928">
    <property type="entry name" value="6-hairpin_glycosidase_sf"/>
</dbReference>
<dbReference type="InterPro" id="IPR005198">
    <property type="entry name" value="Glyco_hydro_76"/>
</dbReference>
<dbReference type="InterPro" id="IPR014480">
    <property type="entry name" value="Mannan-1_6-alpha_mannosidase"/>
</dbReference>
<dbReference type="PANTHER" id="PTHR12145">
    <property type="entry name" value="MANNAN ENDO-1,6-ALPHA-MANNOSIDASE DCW1"/>
    <property type="match status" value="1"/>
</dbReference>
<dbReference type="PANTHER" id="PTHR12145:SF36">
    <property type="entry name" value="MANNAN ENDO-1,6-ALPHA-MANNOSIDASE DCW1"/>
    <property type="match status" value="1"/>
</dbReference>
<dbReference type="Pfam" id="PF03663">
    <property type="entry name" value="Glyco_hydro_76"/>
    <property type="match status" value="1"/>
</dbReference>
<dbReference type="PIRSF" id="PIRSF016302">
    <property type="entry name" value="Man_a_manosd"/>
    <property type="match status" value="1"/>
</dbReference>
<dbReference type="SUPFAM" id="SSF48208">
    <property type="entry name" value="Six-hairpin glycosidases"/>
    <property type="match status" value="1"/>
</dbReference>
<feature type="signal peptide" evidence="1">
    <location>
        <begin position="1"/>
        <end position="21"/>
    </location>
</feature>
<feature type="chain" id="PRO_0000424807" description="Mannan endo-1,6-alpha-mannosidase DFG5">
    <location>
        <begin position="22"/>
        <end position="429"/>
    </location>
</feature>
<feature type="propeptide" id="PRO_0000424808" description="Removed in mature form" evidence="1">
    <location>
        <begin position="430"/>
        <end position="451"/>
    </location>
</feature>
<feature type="lipid moiety-binding region" description="GPI-anchor amidated alanine" evidence="1">
    <location>
        <position position="429"/>
    </location>
</feature>
<feature type="glycosylation site" description="N-linked (GlcNAc...) asparagine" evidence="1">
    <location>
        <position position="86"/>
    </location>
</feature>
<feature type="glycosylation site" description="N-linked (GlcNAc...) asparagine" evidence="1">
    <location>
        <position position="111"/>
    </location>
</feature>
<feature type="glycosylation site" description="N-linked (GlcNAc...) asparagine" evidence="1">
    <location>
        <position position="135"/>
    </location>
</feature>
<feature type="glycosylation site" description="N-linked (GlcNAc...) asparagine" evidence="1">
    <location>
        <position position="203"/>
    </location>
</feature>
<feature type="glycosylation site" description="N-linked (GlcNAc...) asparagine" evidence="1">
    <location>
        <position position="243"/>
    </location>
</feature>
<feature type="glycosylation site" description="N-linked (GlcNAc...) asparagine" evidence="1">
    <location>
        <position position="268"/>
    </location>
</feature>
<feature type="glycosylation site" description="N-linked (GlcNAc...) asparagine" evidence="1">
    <location>
        <position position="402"/>
    </location>
</feature>
<organism>
    <name type="scientific">Candida albicans (strain SC5314 / ATCC MYA-2876)</name>
    <name type="common">Yeast</name>
    <dbReference type="NCBI Taxonomy" id="237561"/>
    <lineage>
        <taxon>Eukaryota</taxon>
        <taxon>Fungi</taxon>
        <taxon>Dikarya</taxon>
        <taxon>Ascomycota</taxon>
        <taxon>Saccharomycotina</taxon>
        <taxon>Pichiomycetes</taxon>
        <taxon>Debaryomycetaceae</taxon>
        <taxon>Candida/Lodderomyces clade</taxon>
        <taxon>Candida</taxon>
    </lineage>
</organism>
<proteinExistence type="evidence at protein level"/>
<sequence length="451" mass="50031">MVSLQQLTISILLLFTASVQSLDINVDDKDSICSAAKYVVQGIWNYYEGLKYGGTVGMFAPPNYWWNAGEAFGGLVDFYTYCQSDNSTLEKLIYNGMYHQAGENYNYIPSNQSMTEGNDDQGVWGMAIMEAVERNFTEPESHSWLEMVQAVFNTMNARWDADNCGGGLRWQIFTWNSGYDYKNSISNGCLFHLAARLARYTGNSSVYVDTAEKVWKWMEDVGFLTEEDNGDVRIYDGAKITNNCSSVTDLRWSYTYGVFMAGCAYLYNFTGDDVWLTRTNEIVQASLSYFFANKIMQETTCQPQNKCNNDQRSFRCLFSRCLGLTTQLAPETKDRIREVLEASAEGAAKSCSGGSDGVTCGENWAIDKWDGVYGLGEQTSALEVMMALIVEPPLSVKTGGTNRTDYSAGTNSEDNANKNELTITGKDKAGAGVLTAIVLAVILGGAIWMIF</sequence>
<comment type="function">
    <text evidence="2">Required for normal synthesis of the cell wall and alkaline pH-induced hypha formation.</text>
</comment>
<comment type="catalytic activity">
    <reaction>
        <text>Random hydrolysis of (1-&gt;6)-alpha-D-mannosidic linkages in unbranched (1-&gt;6)-mannans.</text>
        <dbReference type="EC" id="3.2.1.101"/>
    </reaction>
</comment>
<comment type="subcellular location">
    <subcellularLocation>
        <location evidence="2">Secreted</location>
        <location evidence="2">Cell wall</location>
    </subcellularLocation>
    <subcellularLocation>
        <location evidence="2">Cell membrane</location>
        <topology evidence="2">Lipid-anchor</topology>
        <topology evidence="2">GPI-anchor</topology>
    </subcellularLocation>
</comment>
<comment type="induction">
    <text evidence="3 5">Induced by caspofungin. Expression is also regulated by SPF1.</text>
</comment>
<comment type="PTM">
    <text>The GPI-anchor is attached to the protein in the endoplasmic reticulum and serves to target the protein to the cell surface. There, the glucosamine-inositol phospholipid moiety is cleaved off and the GPI-modified mannoprotein is covalently attached via its lipidless GPI glycan remnant to the 1,6-beta-glucan of the outer cell wall layer.</text>
</comment>
<comment type="PTM">
    <text>N-mannosylated.</text>
</comment>
<comment type="disruption phenotype">
    <text evidence="4">Leads to decreased caspofungin sensitivity.</text>
</comment>
<comment type="similarity">
    <text evidence="6">Belongs to the glycosyl hydrolase 76 family.</text>
</comment>
<protein>
    <recommendedName>
        <fullName>Mannan endo-1,6-alpha-mannosidase DFG5</fullName>
        <ecNumber>3.2.1.101</ecNumber>
    </recommendedName>
    <alternativeName>
        <fullName>Endo-alpha-1-&gt;6-D-mannanase DFG5</fullName>
    </alternativeName>
</protein>
<accession>Q5ACZ2</accession>
<accession>A0A1D8PG43</accession>